<sequence>MALTKAEMSEYLFDKLGLSKRDAKELVELFFEEIRRALENGEQVKLSGFGNFDLRDKNQRPGRNPKTGEDIPITARRVVTFRPGQKLKSRVENASPKDE</sequence>
<dbReference type="EMBL" id="CU928163">
    <property type="protein sequence ID" value="CAR13199.1"/>
    <property type="molecule type" value="Genomic_DNA"/>
</dbReference>
<dbReference type="RefSeq" id="WP_001229265.1">
    <property type="nucleotide sequence ID" value="NC_011751.1"/>
</dbReference>
<dbReference type="RefSeq" id="YP_002412731.1">
    <property type="nucleotide sequence ID" value="NC_011751.1"/>
</dbReference>
<dbReference type="SMR" id="B7N550"/>
<dbReference type="STRING" id="585056.ECUMN_2003"/>
<dbReference type="GeneID" id="93775925"/>
<dbReference type="KEGG" id="eum:ECUMN_2003"/>
<dbReference type="PATRIC" id="fig|585056.7.peg.2188"/>
<dbReference type="HOGENOM" id="CLU_105066_1_3_6"/>
<dbReference type="Proteomes" id="UP000007097">
    <property type="component" value="Chromosome"/>
</dbReference>
<dbReference type="GO" id="GO:0005829">
    <property type="term" value="C:cytosol"/>
    <property type="evidence" value="ECO:0007669"/>
    <property type="project" value="TreeGrafter"/>
</dbReference>
<dbReference type="GO" id="GO:0003677">
    <property type="term" value="F:DNA binding"/>
    <property type="evidence" value="ECO:0007669"/>
    <property type="project" value="UniProtKB-UniRule"/>
</dbReference>
<dbReference type="GO" id="GO:0030527">
    <property type="term" value="F:structural constituent of chromatin"/>
    <property type="evidence" value="ECO:0007669"/>
    <property type="project" value="InterPro"/>
</dbReference>
<dbReference type="GO" id="GO:0006310">
    <property type="term" value="P:DNA recombination"/>
    <property type="evidence" value="ECO:0007669"/>
    <property type="project" value="UniProtKB-UniRule"/>
</dbReference>
<dbReference type="GO" id="GO:0009893">
    <property type="term" value="P:positive regulation of metabolic process"/>
    <property type="evidence" value="ECO:0007669"/>
    <property type="project" value="UniProtKB-ARBA"/>
</dbReference>
<dbReference type="GO" id="GO:0006355">
    <property type="term" value="P:regulation of DNA-templated transcription"/>
    <property type="evidence" value="ECO:0007669"/>
    <property type="project" value="UniProtKB-UniRule"/>
</dbReference>
<dbReference type="GO" id="GO:0006417">
    <property type="term" value="P:regulation of translation"/>
    <property type="evidence" value="ECO:0007669"/>
    <property type="project" value="UniProtKB-UniRule"/>
</dbReference>
<dbReference type="CDD" id="cd13835">
    <property type="entry name" value="IHF_A"/>
    <property type="match status" value="1"/>
</dbReference>
<dbReference type="FunFam" id="4.10.520.10:FF:000002">
    <property type="entry name" value="Integration host factor subunit alpha"/>
    <property type="match status" value="1"/>
</dbReference>
<dbReference type="Gene3D" id="4.10.520.10">
    <property type="entry name" value="IHF-like DNA-binding proteins"/>
    <property type="match status" value="1"/>
</dbReference>
<dbReference type="HAMAP" id="MF_00380">
    <property type="entry name" value="IHF_alpha"/>
    <property type="match status" value="1"/>
</dbReference>
<dbReference type="InterPro" id="IPR000119">
    <property type="entry name" value="Hist_DNA-bd"/>
</dbReference>
<dbReference type="InterPro" id="IPR020816">
    <property type="entry name" value="Histone-like_DNA-bd_CS"/>
</dbReference>
<dbReference type="InterPro" id="IPR010992">
    <property type="entry name" value="IHF-like_DNA-bd_dom_sf"/>
</dbReference>
<dbReference type="InterPro" id="IPR005684">
    <property type="entry name" value="IHF_alpha"/>
</dbReference>
<dbReference type="NCBIfam" id="TIGR00987">
    <property type="entry name" value="himA"/>
    <property type="match status" value="1"/>
</dbReference>
<dbReference type="NCBIfam" id="NF001401">
    <property type="entry name" value="PRK00285.1"/>
    <property type="match status" value="1"/>
</dbReference>
<dbReference type="PANTHER" id="PTHR33175">
    <property type="entry name" value="DNA-BINDING PROTEIN HU"/>
    <property type="match status" value="1"/>
</dbReference>
<dbReference type="PANTHER" id="PTHR33175:SF2">
    <property type="entry name" value="INTEGRATION HOST FACTOR SUBUNIT ALPHA"/>
    <property type="match status" value="1"/>
</dbReference>
<dbReference type="Pfam" id="PF00216">
    <property type="entry name" value="Bac_DNA_binding"/>
    <property type="match status" value="1"/>
</dbReference>
<dbReference type="PRINTS" id="PR01727">
    <property type="entry name" value="DNABINDINGHU"/>
</dbReference>
<dbReference type="SMART" id="SM00411">
    <property type="entry name" value="BHL"/>
    <property type="match status" value="1"/>
</dbReference>
<dbReference type="SUPFAM" id="SSF47729">
    <property type="entry name" value="IHF-like DNA-binding proteins"/>
    <property type="match status" value="1"/>
</dbReference>
<dbReference type="PROSITE" id="PS00045">
    <property type="entry name" value="HISTONE_LIKE"/>
    <property type="match status" value="1"/>
</dbReference>
<gene>
    <name evidence="1" type="primary">ihfA</name>
    <name evidence="1" type="synonym">himA</name>
    <name type="ordered locus">ECUMN_2003</name>
</gene>
<reference key="1">
    <citation type="journal article" date="2009" name="PLoS Genet.">
        <title>Organised genome dynamics in the Escherichia coli species results in highly diverse adaptive paths.</title>
        <authorList>
            <person name="Touchon M."/>
            <person name="Hoede C."/>
            <person name="Tenaillon O."/>
            <person name="Barbe V."/>
            <person name="Baeriswyl S."/>
            <person name="Bidet P."/>
            <person name="Bingen E."/>
            <person name="Bonacorsi S."/>
            <person name="Bouchier C."/>
            <person name="Bouvet O."/>
            <person name="Calteau A."/>
            <person name="Chiapello H."/>
            <person name="Clermont O."/>
            <person name="Cruveiller S."/>
            <person name="Danchin A."/>
            <person name="Diard M."/>
            <person name="Dossat C."/>
            <person name="Karoui M.E."/>
            <person name="Frapy E."/>
            <person name="Garry L."/>
            <person name="Ghigo J.M."/>
            <person name="Gilles A.M."/>
            <person name="Johnson J."/>
            <person name="Le Bouguenec C."/>
            <person name="Lescat M."/>
            <person name="Mangenot S."/>
            <person name="Martinez-Jehanne V."/>
            <person name="Matic I."/>
            <person name="Nassif X."/>
            <person name="Oztas S."/>
            <person name="Petit M.A."/>
            <person name="Pichon C."/>
            <person name="Rouy Z."/>
            <person name="Ruf C.S."/>
            <person name="Schneider D."/>
            <person name="Tourret J."/>
            <person name="Vacherie B."/>
            <person name="Vallenet D."/>
            <person name="Medigue C."/>
            <person name="Rocha E.P.C."/>
            <person name="Denamur E."/>
        </authorList>
    </citation>
    <scope>NUCLEOTIDE SEQUENCE [LARGE SCALE GENOMIC DNA]</scope>
    <source>
        <strain>UMN026 / ExPEC</strain>
    </source>
</reference>
<protein>
    <recommendedName>
        <fullName evidence="1">Integration host factor subunit alpha</fullName>
        <shortName evidence="1">IHF-alpha</shortName>
    </recommendedName>
</protein>
<name>IHFA_ECOLU</name>
<comment type="function">
    <text evidence="1">This protein is one of the two subunits of integration host factor, a specific DNA-binding protein that functions in genetic recombination as well as in transcriptional and translational control.</text>
</comment>
<comment type="subunit">
    <text evidence="1">Heterodimer of an alpha and a beta chain.</text>
</comment>
<comment type="similarity">
    <text evidence="1">Belongs to the bacterial histone-like protein family.</text>
</comment>
<keyword id="KW-0233">DNA recombination</keyword>
<keyword id="KW-0238">DNA-binding</keyword>
<keyword id="KW-0804">Transcription</keyword>
<keyword id="KW-0805">Transcription regulation</keyword>
<keyword id="KW-0810">Translation regulation</keyword>
<proteinExistence type="inferred from homology"/>
<feature type="chain" id="PRO_1000122139" description="Integration host factor subunit alpha">
    <location>
        <begin position="1"/>
        <end position="99"/>
    </location>
</feature>
<feature type="region of interest" description="Disordered" evidence="2">
    <location>
        <begin position="49"/>
        <end position="73"/>
    </location>
</feature>
<evidence type="ECO:0000255" key="1">
    <source>
        <dbReference type="HAMAP-Rule" id="MF_00380"/>
    </source>
</evidence>
<evidence type="ECO:0000256" key="2">
    <source>
        <dbReference type="SAM" id="MobiDB-lite"/>
    </source>
</evidence>
<organism>
    <name type="scientific">Escherichia coli O17:K52:H18 (strain UMN026 / ExPEC)</name>
    <dbReference type="NCBI Taxonomy" id="585056"/>
    <lineage>
        <taxon>Bacteria</taxon>
        <taxon>Pseudomonadati</taxon>
        <taxon>Pseudomonadota</taxon>
        <taxon>Gammaproteobacteria</taxon>
        <taxon>Enterobacterales</taxon>
        <taxon>Enterobacteriaceae</taxon>
        <taxon>Escherichia</taxon>
    </lineage>
</organism>
<accession>B7N550</accession>